<sequence length="135" mass="15520">MSLYEHVFIARQDLSNAQAEGLIEHFSTVLADNGGKVVDREYWGVKTMAYKINKNRKGHYAFLKSDAPSAAVQEMERLMRLHDDVMRVLTIKVDKHAEGPSIQMQKRDERERGDRGDRSDRGDRGDRGDRGGFRR</sequence>
<protein>
    <recommendedName>
        <fullName evidence="1">Small ribosomal subunit protein bS6</fullName>
    </recommendedName>
    <alternativeName>
        <fullName evidence="3">30S ribosomal protein S6</fullName>
    </alternativeName>
</protein>
<proteinExistence type="inferred from homology"/>
<comment type="function">
    <text evidence="1">Binds together with bS18 to 16S ribosomal RNA.</text>
</comment>
<comment type="similarity">
    <text evidence="1">Belongs to the bacterial ribosomal protein bS6 family.</text>
</comment>
<reference key="1">
    <citation type="submission" date="2007-02" db="EMBL/GenBank/DDBJ databases">
        <title>Complete sequence of chromosome 1 of Rhodobacter sphaeroides ATCC 17029.</title>
        <authorList>
            <person name="Copeland A."/>
            <person name="Lucas S."/>
            <person name="Lapidus A."/>
            <person name="Barry K."/>
            <person name="Detter J.C."/>
            <person name="Glavina del Rio T."/>
            <person name="Hammon N."/>
            <person name="Israni S."/>
            <person name="Dalin E."/>
            <person name="Tice H."/>
            <person name="Pitluck S."/>
            <person name="Kiss H."/>
            <person name="Brettin T."/>
            <person name="Bruce D."/>
            <person name="Han C."/>
            <person name="Tapia R."/>
            <person name="Gilna P."/>
            <person name="Schmutz J."/>
            <person name="Larimer F."/>
            <person name="Land M."/>
            <person name="Hauser L."/>
            <person name="Kyrpides N."/>
            <person name="Mikhailova N."/>
            <person name="Richardson P."/>
            <person name="Mackenzie C."/>
            <person name="Choudhary M."/>
            <person name="Donohue T.J."/>
            <person name="Kaplan S."/>
        </authorList>
    </citation>
    <scope>NUCLEOTIDE SEQUENCE [LARGE SCALE GENOMIC DNA]</scope>
    <source>
        <strain>ATCC 17029 / ATH 2.4.9</strain>
    </source>
</reference>
<keyword id="KW-0687">Ribonucleoprotein</keyword>
<keyword id="KW-0689">Ribosomal protein</keyword>
<keyword id="KW-0694">RNA-binding</keyword>
<keyword id="KW-0699">rRNA-binding</keyword>
<evidence type="ECO:0000255" key="1">
    <source>
        <dbReference type="HAMAP-Rule" id="MF_00360"/>
    </source>
</evidence>
<evidence type="ECO:0000256" key="2">
    <source>
        <dbReference type="SAM" id="MobiDB-lite"/>
    </source>
</evidence>
<evidence type="ECO:0000305" key="3"/>
<gene>
    <name evidence="1" type="primary">rpsF</name>
    <name type="ordered locus">Rsph17029_1772</name>
</gene>
<accession>A3PKL5</accession>
<name>RS6_CERS1</name>
<organism>
    <name type="scientific">Cereibacter sphaeroides (strain ATCC 17029 / ATH 2.4.9)</name>
    <name type="common">Rhodobacter sphaeroides</name>
    <dbReference type="NCBI Taxonomy" id="349101"/>
    <lineage>
        <taxon>Bacteria</taxon>
        <taxon>Pseudomonadati</taxon>
        <taxon>Pseudomonadota</taxon>
        <taxon>Alphaproteobacteria</taxon>
        <taxon>Rhodobacterales</taxon>
        <taxon>Paracoccaceae</taxon>
        <taxon>Cereibacter</taxon>
    </lineage>
</organism>
<dbReference type="EMBL" id="CP000577">
    <property type="protein sequence ID" value="ABN76881.1"/>
    <property type="molecule type" value="Genomic_DNA"/>
</dbReference>
<dbReference type="RefSeq" id="WP_002720282.1">
    <property type="nucleotide sequence ID" value="NC_009049.1"/>
</dbReference>
<dbReference type="SMR" id="A3PKL5"/>
<dbReference type="GeneID" id="67446887"/>
<dbReference type="KEGG" id="rsh:Rsph17029_1772"/>
<dbReference type="HOGENOM" id="CLU_113441_2_0_5"/>
<dbReference type="GO" id="GO:0022627">
    <property type="term" value="C:cytosolic small ribosomal subunit"/>
    <property type="evidence" value="ECO:0007669"/>
    <property type="project" value="TreeGrafter"/>
</dbReference>
<dbReference type="GO" id="GO:0070181">
    <property type="term" value="F:small ribosomal subunit rRNA binding"/>
    <property type="evidence" value="ECO:0007669"/>
    <property type="project" value="TreeGrafter"/>
</dbReference>
<dbReference type="GO" id="GO:0003735">
    <property type="term" value="F:structural constituent of ribosome"/>
    <property type="evidence" value="ECO:0007669"/>
    <property type="project" value="InterPro"/>
</dbReference>
<dbReference type="GO" id="GO:0006412">
    <property type="term" value="P:translation"/>
    <property type="evidence" value="ECO:0007669"/>
    <property type="project" value="UniProtKB-UniRule"/>
</dbReference>
<dbReference type="CDD" id="cd00473">
    <property type="entry name" value="bS6"/>
    <property type="match status" value="1"/>
</dbReference>
<dbReference type="Gene3D" id="3.30.70.60">
    <property type="match status" value="1"/>
</dbReference>
<dbReference type="HAMAP" id="MF_00360">
    <property type="entry name" value="Ribosomal_bS6"/>
    <property type="match status" value="1"/>
</dbReference>
<dbReference type="InterPro" id="IPR000529">
    <property type="entry name" value="Ribosomal_bS6"/>
</dbReference>
<dbReference type="InterPro" id="IPR035980">
    <property type="entry name" value="Ribosomal_bS6_sf"/>
</dbReference>
<dbReference type="InterPro" id="IPR020814">
    <property type="entry name" value="Ribosomal_S6_plastid/chlpt"/>
</dbReference>
<dbReference type="InterPro" id="IPR014717">
    <property type="entry name" value="Transl_elong_EF1B/ribsomal_bS6"/>
</dbReference>
<dbReference type="NCBIfam" id="TIGR00166">
    <property type="entry name" value="S6"/>
    <property type="match status" value="1"/>
</dbReference>
<dbReference type="PANTHER" id="PTHR21011">
    <property type="entry name" value="MITOCHONDRIAL 28S RIBOSOMAL PROTEIN S6"/>
    <property type="match status" value="1"/>
</dbReference>
<dbReference type="PANTHER" id="PTHR21011:SF1">
    <property type="entry name" value="SMALL RIBOSOMAL SUBUNIT PROTEIN BS6M"/>
    <property type="match status" value="1"/>
</dbReference>
<dbReference type="Pfam" id="PF01250">
    <property type="entry name" value="Ribosomal_S6"/>
    <property type="match status" value="1"/>
</dbReference>
<dbReference type="SUPFAM" id="SSF54995">
    <property type="entry name" value="Ribosomal protein S6"/>
    <property type="match status" value="1"/>
</dbReference>
<feature type="chain" id="PRO_1000005333" description="Small ribosomal subunit protein bS6">
    <location>
        <begin position="1"/>
        <end position="135"/>
    </location>
</feature>
<feature type="region of interest" description="Disordered" evidence="2">
    <location>
        <begin position="96"/>
        <end position="135"/>
    </location>
</feature>
<feature type="compositionally biased region" description="Basic and acidic residues" evidence="2">
    <location>
        <begin position="105"/>
        <end position="135"/>
    </location>
</feature>